<dbReference type="EMBL" id="CR382130">
    <property type="protein sequence ID" value="CAG81456.1"/>
    <property type="molecule type" value="Genomic_DNA"/>
</dbReference>
<dbReference type="RefSeq" id="XP_503252.1">
    <property type="nucleotide sequence ID" value="XM_503252.1"/>
</dbReference>
<dbReference type="SMR" id="Q6C7W0"/>
<dbReference type="FunCoup" id="Q6C7W0">
    <property type="interactions" value="61"/>
</dbReference>
<dbReference type="STRING" id="284591.Q6C7W0"/>
<dbReference type="EnsemblFungi" id="CAG81456">
    <property type="protein sequence ID" value="CAG81456"/>
    <property type="gene ID" value="YALI0_D24926g"/>
</dbReference>
<dbReference type="KEGG" id="yli:2910962"/>
<dbReference type="VEuPathDB" id="FungiDB:YALI0_D24926g"/>
<dbReference type="HOGENOM" id="CLU_043692_0_0_1"/>
<dbReference type="InParanoid" id="Q6C7W0"/>
<dbReference type="OMA" id="PGCLERQ"/>
<dbReference type="OrthoDB" id="63917at4891"/>
<dbReference type="Proteomes" id="UP000001300">
    <property type="component" value="Chromosome D"/>
</dbReference>
<dbReference type="GO" id="GO:0032865">
    <property type="term" value="C:ERMES complex"/>
    <property type="evidence" value="ECO:0000318"/>
    <property type="project" value="GO_Central"/>
</dbReference>
<dbReference type="GO" id="GO:0008289">
    <property type="term" value="F:lipid binding"/>
    <property type="evidence" value="ECO:0007669"/>
    <property type="project" value="UniProtKB-KW"/>
</dbReference>
<dbReference type="GO" id="GO:0000002">
    <property type="term" value="P:mitochondrial genome maintenance"/>
    <property type="evidence" value="ECO:0007669"/>
    <property type="project" value="UniProtKB-UniRule"/>
</dbReference>
<dbReference type="GO" id="GO:0007005">
    <property type="term" value="P:mitochondrion organization"/>
    <property type="evidence" value="ECO:0000318"/>
    <property type="project" value="GO_Central"/>
</dbReference>
<dbReference type="GO" id="GO:1990456">
    <property type="term" value="P:mitochondrion-endoplasmic reticulum membrane tethering"/>
    <property type="evidence" value="ECO:0000318"/>
    <property type="project" value="GO_Central"/>
</dbReference>
<dbReference type="GO" id="GO:0015914">
    <property type="term" value="P:phospholipid transport"/>
    <property type="evidence" value="ECO:0000318"/>
    <property type="project" value="GO_Central"/>
</dbReference>
<dbReference type="CDD" id="cd21673">
    <property type="entry name" value="SMP_Mdm34"/>
    <property type="match status" value="1"/>
</dbReference>
<dbReference type="HAMAP" id="MF_03105">
    <property type="entry name" value="Mdm34"/>
    <property type="match status" value="1"/>
</dbReference>
<dbReference type="InterPro" id="IPR027536">
    <property type="entry name" value="Mdm34"/>
</dbReference>
<dbReference type="InterPro" id="IPR031468">
    <property type="entry name" value="SMP_LBD"/>
</dbReference>
<dbReference type="PANTHER" id="PTHR28185">
    <property type="entry name" value="MITOCHONDRIAL DISTRIBUTION AND MORPHOLOGY PROTEIN 34"/>
    <property type="match status" value="1"/>
</dbReference>
<dbReference type="PANTHER" id="PTHR28185:SF1">
    <property type="entry name" value="MITOCHONDRIAL DISTRIBUTION AND MORPHOLOGY PROTEIN 34"/>
    <property type="match status" value="1"/>
</dbReference>
<dbReference type="PROSITE" id="PS51847">
    <property type="entry name" value="SMP"/>
    <property type="match status" value="1"/>
</dbReference>
<comment type="function">
    <text evidence="1">Component of the ERMES/MDM complex, which serves as a molecular tether to connect the endoplasmic reticulum (ER) and mitochondria. Components of this complex are involved in the control of mitochondrial shape and protein biogenesis, and function in nonvesicular lipid trafficking between the ER and mitochondria. MDM34 is required for the interaction of the ER-resident membrane protein MMM1 and the outer mitochondrial membrane-resident beta-barrel protein MDM10.</text>
</comment>
<comment type="subunit">
    <text evidence="1">Component of the ER-mitochondria encounter structure (ERMES) or MDM complex, composed of MMM1, MDM10, MDM12 and MDM34.</text>
</comment>
<comment type="subcellular location">
    <subcellularLocation>
        <location evidence="1">Mitochondrion outer membrane</location>
        <topology evidence="1">Multi-pass membrane protein</topology>
    </subcellularLocation>
    <text evidence="1">The ERMES/MDM complex localizes to a few discrete foci (around 10 per single cell), that represent mitochondria-endoplasmic reticulum junctions. These foci are often found next to mtDNA nucleoids.</text>
</comment>
<comment type="domain">
    <text evidence="1">Lacks alpha-helical transmembrane segments, suggesting that it resides in the membrane via beta-sheet conformations similar to those predicted for other outer membrane proteins and porin.</text>
</comment>
<comment type="domain">
    <text evidence="1">The SMP-LTD domain is a barrel-like domain that can bind various types of glycerophospholipids in its interior and mediate their transfer between two adjacent bilayers.</text>
</comment>
<comment type="similarity">
    <text evidence="1">Belongs to the MDM34 family.</text>
</comment>
<sequence length="460" mass="51281">MSFKFDWESLRDESFYERAKTILADALNSDSKPPIIVDDITVKDLDLGDESPFLEILEIGDMADDRFRGIFKLNYTGNASLTLTTKVQANPLNVYRQSFDQSSFVAPQFLAAGSSLAIPLNLTLSDIRLSGIIILVFSRAKGLTLVFRNDPLESIKVSSTFDAIPPLAKFLQVQIENQIRGLFRELLPGIIHRLSQKWVTRDETKSNSNTVMSPHVTQPPSPKLKPVSIMDINPDLPALSPTNMLKISALCASQRTLSLFTPSISDAVYRSNLEQFDVVDEESQFQSEDPYDIVRIQSRNYYRHNHQAPKRRTIKYKRKSKKTDEGDNASTEVTTRETTPLPTSSTPLETSTPSREVIREVKEKLLAEPSSVVMSPSEEKTTLRSIPPPLELSPPSLDLSIDTSLRPYASRNNTPEKKEKPQRPAGPSKRNTLPAPTKKGPGFFSSNLAGYDVPPPAYSG</sequence>
<name>MDM34_YARLI</name>
<feature type="chain" id="PRO_0000384369" description="Mitochondrial distribution and morphology protein 34">
    <location>
        <begin position="1"/>
        <end position="460"/>
    </location>
</feature>
<feature type="domain" description="SMP-LTD" evidence="1">
    <location>
        <begin position="1"/>
        <end position="196"/>
    </location>
</feature>
<feature type="region of interest" description="Disordered" evidence="2">
    <location>
        <begin position="304"/>
        <end position="356"/>
    </location>
</feature>
<feature type="region of interest" description="Disordered" evidence="2">
    <location>
        <begin position="368"/>
        <end position="460"/>
    </location>
</feature>
<feature type="compositionally biased region" description="Basic residues" evidence="2">
    <location>
        <begin position="304"/>
        <end position="321"/>
    </location>
</feature>
<feature type="compositionally biased region" description="Low complexity" evidence="2">
    <location>
        <begin position="330"/>
        <end position="355"/>
    </location>
</feature>
<feature type="compositionally biased region" description="Low complexity" evidence="2">
    <location>
        <begin position="393"/>
        <end position="405"/>
    </location>
</feature>
<protein>
    <recommendedName>
        <fullName evidence="1">Mitochondrial distribution and morphology protein 34</fullName>
    </recommendedName>
</protein>
<evidence type="ECO:0000255" key="1">
    <source>
        <dbReference type="HAMAP-Rule" id="MF_03105"/>
    </source>
</evidence>
<evidence type="ECO:0000256" key="2">
    <source>
        <dbReference type="SAM" id="MobiDB-lite"/>
    </source>
</evidence>
<accession>Q6C7W0</accession>
<proteinExistence type="inferred from homology"/>
<reference key="1">
    <citation type="journal article" date="2004" name="Nature">
        <title>Genome evolution in yeasts.</title>
        <authorList>
            <person name="Dujon B."/>
            <person name="Sherman D."/>
            <person name="Fischer G."/>
            <person name="Durrens P."/>
            <person name="Casaregola S."/>
            <person name="Lafontaine I."/>
            <person name="de Montigny J."/>
            <person name="Marck C."/>
            <person name="Neuveglise C."/>
            <person name="Talla E."/>
            <person name="Goffard N."/>
            <person name="Frangeul L."/>
            <person name="Aigle M."/>
            <person name="Anthouard V."/>
            <person name="Babour A."/>
            <person name="Barbe V."/>
            <person name="Barnay S."/>
            <person name="Blanchin S."/>
            <person name="Beckerich J.-M."/>
            <person name="Beyne E."/>
            <person name="Bleykasten C."/>
            <person name="Boisrame A."/>
            <person name="Boyer J."/>
            <person name="Cattolico L."/>
            <person name="Confanioleri F."/>
            <person name="de Daruvar A."/>
            <person name="Despons L."/>
            <person name="Fabre E."/>
            <person name="Fairhead C."/>
            <person name="Ferry-Dumazet H."/>
            <person name="Groppi A."/>
            <person name="Hantraye F."/>
            <person name="Hennequin C."/>
            <person name="Jauniaux N."/>
            <person name="Joyet P."/>
            <person name="Kachouri R."/>
            <person name="Kerrest A."/>
            <person name="Koszul R."/>
            <person name="Lemaire M."/>
            <person name="Lesur I."/>
            <person name="Ma L."/>
            <person name="Muller H."/>
            <person name="Nicaud J.-M."/>
            <person name="Nikolski M."/>
            <person name="Oztas S."/>
            <person name="Ozier-Kalogeropoulos O."/>
            <person name="Pellenz S."/>
            <person name="Potier S."/>
            <person name="Richard G.-F."/>
            <person name="Straub M.-L."/>
            <person name="Suleau A."/>
            <person name="Swennen D."/>
            <person name="Tekaia F."/>
            <person name="Wesolowski-Louvel M."/>
            <person name="Westhof E."/>
            <person name="Wirth B."/>
            <person name="Zeniou-Meyer M."/>
            <person name="Zivanovic Y."/>
            <person name="Bolotin-Fukuhara M."/>
            <person name="Thierry A."/>
            <person name="Bouchier C."/>
            <person name="Caudron B."/>
            <person name="Scarpelli C."/>
            <person name="Gaillardin C."/>
            <person name="Weissenbach J."/>
            <person name="Wincker P."/>
            <person name="Souciet J.-L."/>
        </authorList>
    </citation>
    <scope>NUCLEOTIDE SEQUENCE [LARGE SCALE GENOMIC DNA]</scope>
    <source>
        <strain>CLIB 122 / E 150</strain>
    </source>
</reference>
<gene>
    <name evidence="1" type="primary">MDM34</name>
    <name type="ordered locus">YALI0D24926g</name>
</gene>
<organism>
    <name type="scientific">Yarrowia lipolytica (strain CLIB 122 / E 150)</name>
    <name type="common">Yeast</name>
    <name type="synonym">Candida lipolytica</name>
    <dbReference type="NCBI Taxonomy" id="284591"/>
    <lineage>
        <taxon>Eukaryota</taxon>
        <taxon>Fungi</taxon>
        <taxon>Dikarya</taxon>
        <taxon>Ascomycota</taxon>
        <taxon>Saccharomycotina</taxon>
        <taxon>Dipodascomycetes</taxon>
        <taxon>Dipodascales</taxon>
        <taxon>Dipodascales incertae sedis</taxon>
        <taxon>Yarrowia</taxon>
    </lineage>
</organism>
<keyword id="KW-0445">Lipid transport</keyword>
<keyword id="KW-0446">Lipid-binding</keyword>
<keyword id="KW-0472">Membrane</keyword>
<keyword id="KW-0496">Mitochondrion</keyword>
<keyword id="KW-1000">Mitochondrion outer membrane</keyword>
<keyword id="KW-1185">Reference proteome</keyword>
<keyword id="KW-0812">Transmembrane</keyword>
<keyword id="KW-1134">Transmembrane beta strand</keyword>
<keyword id="KW-0813">Transport</keyword>